<proteinExistence type="inferred from homology"/>
<feature type="chain" id="PRO_0000267020" description="Enolase">
    <location>
        <begin position="1"/>
        <end position="431"/>
    </location>
</feature>
<feature type="active site" description="Proton donor" evidence="1">
    <location>
        <position position="208"/>
    </location>
</feature>
<feature type="active site" description="Proton acceptor" evidence="1">
    <location>
        <position position="340"/>
    </location>
</feature>
<feature type="binding site" evidence="1">
    <location>
        <position position="166"/>
    </location>
    <ligand>
        <name>(2R)-2-phosphoglycerate</name>
        <dbReference type="ChEBI" id="CHEBI:58289"/>
    </ligand>
</feature>
<feature type="binding site" evidence="1">
    <location>
        <position position="245"/>
    </location>
    <ligand>
        <name>Mg(2+)</name>
        <dbReference type="ChEBI" id="CHEBI:18420"/>
    </ligand>
</feature>
<feature type="binding site" evidence="1">
    <location>
        <position position="288"/>
    </location>
    <ligand>
        <name>Mg(2+)</name>
        <dbReference type="ChEBI" id="CHEBI:18420"/>
    </ligand>
</feature>
<feature type="binding site" evidence="1">
    <location>
        <position position="315"/>
    </location>
    <ligand>
        <name>Mg(2+)</name>
        <dbReference type="ChEBI" id="CHEBI:18420"/>
    </ligand>
</feature>
<feature type="binding site" evidence="1">
    <location>
        <position position="340"/>
    </location>
    <ligand>
        <name>(2R)-2-phosphoglycerate</name>
        <dbReference type="ChEBI" id="CHEBI:58289"/>
    </ligand>
</feature>
<feature type="binding site" evidence="1">
    <location>
        <position position="369"/>
    </location>
    <ligand>
        <name>(2R)-2-phosphoglycerate</name>
        <dbReference type="ChEBI" id="CHEBI:58289"/>
    </ligand>
</feature>
<feature type="binding site" evidence="1">
    <location>
        <position position="370"/>
    </location>
    <ligand>
        <name>(2R)-2-phosphoglycerate</name>
        <dbReference type="ChEBI" id="CHEBI:58289"/>
    </ligand>
</feature>
<feature type="binding site" evidence="1">
    <location>
        <position position="391"/>
    </location>
    <ligand>
        <name>(2R)-2-phosphoglycerate</name>
        <dbReference type="ChEBI" id="CHEBI:58289"/>
    </ligand>
</feature>
<keyword id="KW-0963">Cytoplasm</keyword>
<keyword id="KW-0324">Glycolysis</keyword>
<keyword id="KW-0456">Lyase</keyword>
<keyword id="KW-0460">Magnesium</keyword>
<keyword id="KW-0479">Metal-binding</keyword>
<keyword id="KW-0964">Secreted</keyword>
<protein>
    <recommendedName>
        <fullName evidence="1">Enolase</fullName>
        <ecNumber evidence="1">4.2.1.11</ecNumber>
    </recommendedName>
    <alternativeName>
        <fullName evidence="1">2-phospho-D-glycerate hydro-lyase</fullName>
    </alternativeName>
    <alternativeName>
        <fullName evidence="1">2-phosphoglycerate dehydratase</fullName>
    </alternativeName>
</protein>
<sequence>MKQYIEIIDVVARQILDSRCFPTVEVEVYLEDGTVGRAAVPSGASTGIYEAVELRDGDKDKYLGKGVEKAVANVNDTIAEEIIGLNVLDQAYIDKTLIELDGTKNKGKLGANAILGVSLAVAQAAANYLGMPLYQYIGGVNAKVLPVPMMNIINGGSHADNSVDIQEFMIMPVGFDCFERAVRACAEVYHALKKTLNSKGYSTGVGDEGGFAPNLKSNAEAIEVILEAIEKAGYEPGKEFFIAIDAASSEYYKDGKYVLEHEGKTLTAAEMVDFFEDWVNKYPIISIEDGMAEEDWEGWKLMTERLGKKVQLVGDDLFVTNTERLKTGIEKGIANSILIKLNQIGTLTETLNAIEMANRAGYTAVVSHRSGETEDTTIADLVVAVNAGQIKTGAPARSERVAKYNQLIRINEELGEVAEYRGRNAFFNLSK</sequence>
<accession>Q0STE0</accession>
<organism>
    <name type="scientific">Clostridium perfringens (strain SM101 / Type A)</name>
    <dbReference type="NCBI Taxonomy" id="289380"/>
    <lineage>
        <taxon>Bacteria</taxon>
        <taxon>Bacillati</taxon>
        <taxon>Bacillota</taxon>
        <taxon>Clostridia</taxon>
        <taxon>Eubacteriales</taxon>
        <taxon>Clostridiaceae</taxon>
        <taxon>Clostridium</taxon>
    </lineage>
</organism>
<comment type="function">
    <text evidence="1">Catalyzes the reversible conversion of 2-phosphoglycerate (2-PG) into phosphoenolpyruvate (PEP). It is essential for the degradation of carbohydrates via glycolysis.</text>
</comment>
<comment type="catalytic activity">
    <reaction evidence="1">
        <text>(2R)-2-phosphoglycerate = phosphoenolpyruvate + H2O</text>
        <dbReference type="Rhea" id="RHEA:10164"/>
        <dbReference type="ChEBI" id="CHEBI:15377"/>
        <dbReference type="ChEBI" id="CHEBI:58289"/>
        <dbReference type="ChEBI" id="CHEBI:58702"/>
        <dbReference type="EC" id="4.2.1.11"/>
    </reaction>
</comment>
<comment type="cofactor">
    <cofactor evidence="1">
        <name>Mg(2+)</name>
        <dbReference type="ChEBI" id="CHEBI:18420"/>
    </cofactor>
    <text evidence="1">Binds a second Mg(2+) ion via substrate during catalysis.</text>
</comment>
<comment type="pathway">
    <text evidence="1">Carbohydrate degradation; glycolysis; pyruvate from D-glyceraldehyde 3-phosphate: step 4/5.</text>
</comment>
<comment type="subcellular location">
    <subcellularLocation>
        <location evidence="1">Cytoplasm</location>
    </subcellularLocation>
    <subcellularLocation>
        <location evidence="1">Secreted</location>
    </subcellularLocation>
    <subcellularLocation>
        <location evidence="1">Cell surface</location>
    </subcellularLocation>
    <text evidence="1">Fractions of enolase are present in both the cytoplasm and on the cell surface.</text>
</comment>
<comment type="similarity">
    <text evidence="1">Belongs to the enolase family.</text>
</comment>
<dbReference type="EC" id="4.2.1.11" evidence="1"/>
<dbReference type="EMBL" id="CP000312">
    <property type="protein sequence ID" value="ABG86081.1"/>
    <property type="molecule type" value="Genomic_DNA"/>
</dbReference>
<dbReference type="RefSeq" id="WP_003460354.1">
    <property type="nucleotide sequence ID" value="NZ_CAXVKH010000020.1"/>
</dbReference>
<dbReference type="SMR" id="Q0STE0"/>
<dbReference type="GeneID" id="93002167"/>
<dbReference type="KEGG" id="cpr:CPR_1295"/>
<dbReference type="UniPathway" id="UPA00109">
    <property type="reaction ID" value="UER00187"/>
</dbReference>
<dbReference type="Proteomes" id="UP000001824">
    <property type="component" value="Chromosome"/>
</dbReference>
<dbReference type="GO" id="GO:0009986">
    <property type="term" value="C:cell surface"/>
    <property type="evidence" value="ECO:0007669"/>
    <property type="project" value="UniProtKB-SubCell"/>
</dbReference>
<dbReference type="GO" id="GO:0005576">
    <property type="term" value="C:extracellular region"/>
    <property type="evidence" value="ECO:0007669"/>
    <property type="project" value="UniProtKB-SubCell"/>
</dbReference>
<dbReference type="GO" id="GO:0000015">
    <property type="term" value="C:phosphopyruvate hydratase complex"/>
    <property type="evidence" value="ECO:0007669"/>
    <property type="project" value="InterPro"/>
</dbReference>
<dbReference type="GO" id="GO:0000287">
    <property type="term" value="F:magnesium ion binding"/>
    <property type="evidence" value="ECO:0007669"/>
    <property type="project" value="UniProtKB-UniRule"/>
</dbReference>
<dbReference type="GO" id="GO:0004634">
    <property type="term" value="F:phosphopyruvate hydratase activity"/>
    <property type="evidence" value="ECO:0007669"/>
    <property type="project" value="UniProtKB-UniRule"/>
</dbReference>
<dbReference type="GO" id="GO:0006096">
    <property type="term" value="P:glycolytic process"/>
    <property type="evidence" value="ECO:0007669"/>
    <property type="project" value="UniProtKB-UniRule"/>
</dbReference>
<dbReference type="CDD" id="cd03313">
    <property type="entry name" value="enolase"/>
    <property type="match status" value="1"/>
</dbReference>
<dbReference type="FunFam" id="3.20.20.120:FF:000001">
    <property type="entry name" value="Enolase"/>
    <property type="match status" value="1"/>
</dbReference>
<dbReference type="FunFam" id="3.30.390.10:FF:000001">
    <property type="entry name" value="Enolase"/>
    <property type="match status" value="1"/>
</dbReference>
<dbReference type="Gene3D" id="3.20.20.120">
    <property type="entry name" value="Enolase-like C-terminal domain"/>
    <property type="match status" value="1"/>
</dbReference>
<dbReference type="Gene3D" id="3.30.390.10">
    <property type="entry name" value="Enolase-like, N-terminal domain"/>
    <property type="match status" value="1"/>
</dbReference>
<dbReference type="HAMAP" id="MF_00318">
    <property type="entry name" value="Enolase"/>
    <property type="match status" value="1"/>
</dbReference>
<dbReference type="InterPro" id="IPR000941">
    <property type="entry name" value="Enolase"/>
</dbReference>
<dbReference type="InterPro" id="IPR036849">
    <property type="entry name" value="Enolase-like_C_sf"/>
</dbReference>
<dbReference type="InterPro" id="IPR029017">
    <property type="entry name" value="Enolase-like_N"/>
</dbReference>
<dbReference type="InterPro" id="IPR020810">
    <property type="entry name" value="Enolase_C"/>
</dbReference>
<dbReference type="InterPro" id="IPR020809">
    <property type="entry name" value="Enolase_CS"/>
</dbReference>
<dbReference type="InterPro" id="IPR020811">
    <property type="entry name" value="Enolase_N"/>
</dbReference>
<dbReference type="NCBIfam" id="TIGR01060">
    <property type="entry name" value="eno"/>
    <property type="match status" value="1"/>
</dbReference>
<dbReference type="PANTHER" id="PTHR11902">
    <property type="entry name" value="ENOLASE"/>
    <property type="match status" value="1"/>
</dbReference>
<dbReference type="PANTHER" id="PTHR11902:SF1">
    <property type="entry name" value="ENOLASE"/>
    <property type="match status" value="1"/>
</dbReference>
<dbReference type="Pfam" id="PF00113">
    <property type="entry name" value="Enolase_C"/>
    <property type="match status" value="1"/>
</dbReference>
<dbReference type="Pfam" id="PF03952">
    <property type="entry name" value="Enolase_N"/>
    <property type="match status" value="1"/>
</dbReference>
<dbReference type="PIRSF" id="PIRSF001400">
    <property type="entry name" value="Enolase"/>
    <property type="match status" value="1"/>
</dbReference>
<dbReference type="PRINTS" id="PR00148">
    <property type="entry name" value="ENOLASE"/>
</dbReference>
<dbReference type="SFLD" id="SFLDS00001">
    <property type="entry name" value="Enolase"/>
    <property type="match status" value="1"/>
</dbReference>
<dbReference type="SFLD" id="SFLDF00002">
    <property type="entry name" value="enolase"/>
    <property type="match status" value="1"/>
</dbReference>
<dbReference type="SMART" id="SM01192">
    <property type="entry name" value="Enolase_C"/>
    <property type="match status" value="1"/>
</dbReference>
<dbReference type="SMART" id="SM01193">
    <property type="entry name" value="Enolase_N"/>
    <property type="match status" value="1"/>
</dbReference>
<dbReference type="SUPFAM" id="SSF51604">
    <property type="entry name" value="Enolase C-terminal domain-like"/>
    <property type="match status" value="1"/>
</dbReference>
<dbReference type="SUPFAM" id="SSF54826">
    <property type="entry name" value="Enolase N-terminal domain-like"/>
    <property type="match status" value="1"/>
</dbReference>
<dbReference type="PROSITE" id="PS00164">
    <property type="entry name" value="ENOLASE"/>
    <property type="match status" value="1"/>
</dbReference>
<reference key="1">
    <citation type="journal article" date="2006" name="Genome Res.">
        <title>Skewed genomic variability in strains of the toxigenic bacterial pathogen, Clostridium perfringens.</title>
        <authorList>
            <person name="Myers G.S.A."/>
            <person name="Rasko D.A."/>
            <person name="Cheung J.K."/>
            <person name="Ravel J."/>
            <person name="Seshadri R."/>
            <person name="DeBoy R.T."/>
            <person name="Ren Q."/>
            <person name="Varga J."/>
            <person name="Awad M.M."/>
            <person name="Brinkac L.M."/>
            <person name="Daugherty S.C."/>
            <person name="Haft D.H."/>
            <person name="Dodson R.J."/>
            <person name="Madupu R."/>
            <person name="Nelson W.C."/>
            <person name="Rosovitz M.J."/>
            <person name="Sullivan S.A."/>
            <person name="Khouri H."/>
            <person name="Dimitrov G.I."/>
            <person name="Watkins K.L."/>
            <person name="Mulligan S."/>
            <person name="Benton J."/>
            <person name="Radune D."/>
            <person name="Fisher D.J."/>
            <person name="Atkins H.S."/>
            <person name="Hiscox T."/>
            <person name="Jost B.H."/>
            <person name="Billington S.J."/>
            <person name="Songer J.G."/>
            <person name="McClane B.A."/>
            <person name="Titball R.W."/>
            <person name="Rood J.I."/>
            <person name="Melville S.B."/>
            <person name="Paulsen I.T."/>
        </authorList>
    </citation>
    <scope>NUCLEOTIDE SEQUENCE [LARGE SCALE GENOMIC DNA]</scope>
    <source>
        <strain>SM101 / Type A</strain>
    </source>
</reference>
<evidence type="ECO:0000255" key="1">
    <source>
        <dbReference type="HAMAP-Rule" id="MF_00318"/>
    </source>
</evidence>
<gene>
    <name evidence="1" type="primary">eno</name>
    <name type="ordered locus">CPR_1295</name>
</gene>
<name>ENO_CLOPS</name>